<feature type="chain" id="PRO_1000203108" description="Arginine--tRNA ligase">
    <location>
        <begin position="1"/>
        <end position="644"/>
    </location>
</feature>
<feature type="short sequence motif" description="'HIGH' region">
    <location>
        <begin position="134"/>
        <end position="144"/>
    </location>
</feature>
<keyword id="KW-0030">Aminoacyl-tRNA synthetase</keyword>
<keyword id="KW-0067">ATP-binding</keyword>
<keyword id="KW-0963">Cytoplasm</keyword>
<keyword id="KW-0436">Ligase</keyword>
<keyword id="KW-0547">Nucleotide-binding</keyword>
<keyword id="KW-0648">Protein biosynthesis</keyword>
<keyword id="KW-1185">Reference proteome</keyword>
<evidence type="ECO:0000255" key="1">
    <source>
        <dbReference type="HAMAP-Rule" id="MF_00123"/>
    </source>
</evidence>
<proteinExistence type="inferred from homology"/>
<sequence>MTYDDIKAKVGELLKTIISEMLEKEGKTWEGEILFDETPNMEFGDFATTVAFLLAKVFKKAPRIIAQEIASNLEDKLPEYIAKVEVAGAGYINFFLDYEKFSKLTVKEILQKGEHFGESKIGEGKKVIVEHTSVNPTKPLHMGHARNAVLGDTVARIMRALGYNVEVQNYIDDLGVQFAQVLWGYLNMREEFESIIKELKEKGLSKEDILDHALGLLYVEVHKKMEEYPEVEREIRSIMKELEKEDNEISEKGRKLAEDVVKAQMKTTYRLSISYDLLSWESDIVRSGIFEESYKRIQENSHFEWAQEGKYKGAFIMKLGDLFPDLENPDTVLIRSDGTATYTGKDIAYHLWKFGKVSADMRYKVWDKINDHKTWTTAKDGERMPGRFANAEIVINVVGSEQRYEQMAVAYALKLLGYEEEYHNFHHLAYEHVVRPEGKFSGRKGTWIGFTVDEVLDEAVKRAKELVEEKNPSLSGEEKEKIAEIVGVGAVRYNLVKYSPEKIITFRWEDVLNFEGESAPYIQYAHARCASILKKAMEEGINIDKDALLKNADFSKLDNKEKELIKIISKFPEIVKTAGRDIKPHLLATYANELAMVFNSFYMALPVLKAEEGVRELRLLLVIATKQVLKNTLGLMGIEAPEVM</sequence>
<organism>
    <name type="scientific">Thermococcus sibiricus (strain DSM 12597 / MM 739)</name>
    <dbReference type="NCBI Taxonomy" id="604354"/>
    <lineage>
        <taxon>Archaea</taxon>
        <taxon>Methanobacteriati</taxon>
        <taxon>Methanobacteriota</taxon>
        <taxon>Thermococci</taxon>
        <taxon>Thermococcales</taxon>
        <taxon>Thermococcaceae</taxon>
        <taxon>Thermococcus</taxon>
    </lineage>
</organism>
<gene>
    <name evidence="1" type="primary">argS</name>
    <name type="ordered locus">TSIB_1925</name>
</gene>
<protein>
    <recommendedName>
        <fullName evidence="1">Arginine--tRNA ligase</fullName>
        <ecNumber evidence="1">6.1.1.19</ecNumber>
    </recommendedName>
    <alternativeName>
        <fullName evidence="1">Arginyl-tRNA synthetase</fullName>
        <shortName evidence="1">ArgRS</shortName>
    </alternativeName>
</protein>
<name>SYR_THESM</name>
<comment type="catalytic activity">
    <reaction evidence="1">
        <text>tRNA(Arg) + L-arginine + ATP = L-arginyl-tRNA(Arg) + AMP + diphosphate</text>
        <dbReference type="Rhea" id="RHEA:20301"/>
        <dbReference type="Rhea" id="RHEA-COMP:9658"/>
        <dbReference type="Rhea" id="RHEA-COMP:9673"/>
        <dbReference type="ChEBI" id="CHEBI:30616"/>
        <dbReference type="ChEBI" id="CHEBI:32682"/>
        <dbReference type="ChEBI" id="CHEBI:33019"/>
        <dbReference type="ChEBI" id="CHEBI:78442"/>
        <dbReference type="ChEBI" id="CHEBI:78513"/>
        <dbReference type="ChEBI" id="CHEBI:456215"/>
        <dbReference type="EC" id="6.1.1.19"/>
    </reaction>
</comment>
<comment type="subcellular location">
    <subcellularLocation>
        <location evidence="1">Cytoplasm</location>
    </subcellularLocation>
</comment>
<comment type="similarity">
    <text evidence="1">Belongs to the class-I aminoacyl-tRNA synthetase family.</text>
</comment>
<dbReference type="EC" id="6.1.1.19" evidence="1"/>
<dbReference type="EMBL" id="CP001463">
    <property type="protein sequence ID" value="ACS90974.1"/>
    <property type="molecule type" value="Genomic_DNA"/>
</dbReference>
<dbReference type="RefSeq" id="WP_015850190.1">
    <property type="nucleotide sequence ID" value="NC_012883.1"/>
</dbReference>
<dbReference type="SMR" id="C5ZZZ3"/>
<dbReference type="STRING" id="604354.TSIB_1925"/>
<dbReference type="GeneID" id="8096937"/>
<dbReference type="KEGG" id="tsi:TSIB_1925"/>
<dbReference type="eggNOG" id="arCOG00487">
    <property type="taxonomic scope" value="Archaea"/>
</dbReference>
<dbReference type="HOGENOM" id="CLU_006406_6_1_2"/>
<dbReference type="OrthoDB" id="372102at2157"/>
<dbReference type="Proteomes" id="UP000009079">
    <property type="component" value="Chromosome"/>
</dbReference>
<dbReference type="GO" id="GO:0005737">
    <property type="term" value="C:cytoplasm"/>
    <property type="evidence" value="ECO:0007669"/>
    <property type="project" value="UniProtKB-SubCell"/>
</dbReference>
<dbReference type="GO" id="GO:0004814">
    <property type="term" value="F:arginine-tRNA ligase activity"/>
    <property type="evidence" value="ECO:0007669"/>
    <property type="project" value="UniProtKB-UniRule"/>
</dbReference>
<dbReference type="GO" id="GO:0005524">
    <property type="term" value="F:ATP binding"/>
    <property type="evidence" value="ECO:0007669"/>
    <property type="project" value="UniProtKB-UniRule"/>
</dbReference>
<dbReference type="GO" id="GO:0006420">
    <property type="term" value="P:arginyl-tRNA aminoacylation"/>
    <property type="evidence" value="ECO:0007669"/>
    <property type="project" value="UniProtKB-UniRule"/>
</dbReference>
<dbReference type="CDD" id="cd07956">
    <property type="entry name" value="Anticodon_Ia_Arg"/>
    <property type="match status" value="1"/>
</dbReference>
<dbReference type="FunFam" id="1.10.730.10:FF:000008">
    <property type="entry name" value="Arginine--tRNA ligase"/>
    <property type="match status" value="1"/>
</dbReference>
<dbReference type="FunFam" id="3.30.1360.70:FF:000008">
    <property type="entry name" value="Arginine--tRNA ligase"/>
    <property type="match status" value="1"/>
</dbReference>
<dbReference type="FunFam" id="3.40.50.620:FF:000190">
    <property type="entry name" value="Arginine--tRNA ligase"/>
    <property type="match status" value="1"/>
</dbReference>
<dbReference type="Gene3D" id="3.30.1360.70">
    <property type="entry name" value="Arginyl tRNA synthetase N-terminal domain"/>
    <property type="match status" value="1"/>
</dbReference>
<dbReference type="Gene3D" id="3.40.50.620">
    <property type="entry name" value="HUPs"/>
    <property type="match status" value="1"/>
</dbReference>
<dbReference type="Gene3D" id="1.10.730.10">
    <property type="entry name" value="Isoleucyl-tRNA Synthetase, Domain 1"/>
    <property type="match status" value="1"/>
</dbReference>
<dbReference type="HAMAP" id="MF_00123">
    <property type="entry name" value="Arg_tRNA_synth"/>
    <property type="match status" value="1"/>
</dbReference>
<dbReference type="InterPro" id="IPR001412">
    <property type="entry name" value="aa-tRNA-synth_I_CS"/>
</dbReference>
<dbReference type="InterPro" id="IPR001278">
    <property type="entry name" value="Arg-tRNA-ligase"/>
</dbReference>
<dbReference type="InterPro" id="IPR005148">
    <property type="entry name" value="Arg-tRNA-synth_N"/>
</dbReference>
<dbReference type="InterPro" id="IPR036695">
    <property type="entry name" value="Arg-tRNA-synth_N_sf"/>
</dbReference>
<dbReference type="InterPro" id="IPR035684">
    <property type="entry name" value="ArgRS_core"/>
</dbReference>
<dbReference type="InterPro" id="IPR008909">
    <property type="entry name" value="DALR_anticod-bd"/>
</dbReference>
<dbReference type="InterPro" id="IPR014729">
    <property type="entry name" value="Rossmann-like_a/b/a_fold"/>
</dbReference>
<dbReference type="InterPro" id="IPR009080">
    <property type="entry name" value="tRNAsynth_Ia_anticodon-bd"/>
</dbReference>
<dbReference type="NCBIfam" id="TIGR00456">
    <property type="entry name" value="argS"/>
    <property type="match status" value="1"/>
</dbReference>
<dbReference type="NCBIfam" id="NF002447">
    <property type="entry name" value="PRK01611.3-4"/>
    <property type="match status" value="1"/>
</dbReference>
<dbReference type="PANTHER" id="PTHR11956:SF5">
    <property type="entry name" value="ARGININE--TRNA LIGASE, CYTOPLASMIC"/>
    <property type="match status" value="1"/>
</dbReference>
<dbReference type="PANTHER" id="PTHR11956">
    <property type="entry name" value="ARGINYL-TRNA SYNTHETASE"/>
    <property type="match status" value="1"/>
</dbReference>
<dbReference type="Pfam" id="PF03485">
    <property type="entry name" value="Arg_tRNA_synt_N"/>
    <property type="match status" value="1"/>
</dbReference>
<dbReference type="Pfam" id="PF05746">
    <property type="entry name" value="DALR_1"/>
    <property type="match status" value="1"/>
</dbReference>
<dbReference type="Pfam" id="PF00750">
    <property type="entry name" value="tRNA-synt_1d"/>
    <property type="match status" value="2"/>
</dbReference>
<dbReference type="PRINTS" id="PR01038">
    <property type="entry name" value="TRNASYNTHARG"/>
</dbReference>
<dbReference type="SMART" id="SM01016">
    <property type="entry name" value="Arg_tRNA_synt_N"/>
    <property type="match status" value="1"/>
</dbReference>
<dbReference type="SMART" id="SM00836">
    <property type="entry name" value="DALR_1"/>
    <property type="match status" value="1"/>
</dbReference>
<dbReference type="SUPFAM" id="SSF47323">
    <property type="entry name" value="Anticodon-binding domain of a subclass of class I aminoacyl-tRNA synthetases"/>
    <property type="match status" value="1"/>
</dbReference>
<dbReference type="SUPFAM" id="SSF55190">
    <property type="entry name" value="Arginyl-tRNA synthetase (ArgRS), N-terminal 'additional' domain"/>
    <property type="match status" value="1"/>
</dbReference>
<dbReference type="SUPFAM" id="SSF52374">
    <property type="entry name" value="Nucleotidylyl transferase"/>
    <property type="match status" value="1"/>
</dbReference>
<dbReference type="PROSITE" id="PS00178">
    <property type="entry name" value="AA_TRNA_LIGASE_I"/>
    <property type="match status" value="1"/>
</dbReference>
<reference key="1">
    <citation type="journal article" date="2009" name="Appl. Environ. Microbiol.">
        <title>Metabolic versatility and indigenous origin of the archaeon Thermococcus sibiricus, isolated from a siberian oil reservoir, as revealed by genome analysis.</title>
        <authorList>
            <person name="Mardanov A.V."/>
            <person name="Ravin N.V."/>
            <person name="Svetlitchnyi V.A."/>
            <person name="Beletsky A.V."/>
            <person name="Miroshnichenko M.L."/>
            <person name="Bonch-Osmolovskaya E.A."/>
            <person name="Skryabin K.G."/>
        </authorList>
    </citation>
    <scope>NUCLEOTIDE SEQUENCE [LARGE SCALE GENOMIC DNA]</scope>
    <source>
        <strain>DSM 12597 / MM 739</strain>
    </source>
</reference>
<accession>C5ZZZ3</accession>